<comment type="function">
    <text evidence="5">Probable toxin that belongs to the MSDIN-like toxin family responsible for a large number of food poisoning cases and deaths (PubMed:24050899).</text>
</comment>
<comment type="tissue specificity">
    <text evidence="2">Expressed in basidiocarps (PubMed:24050899).</text>
</comment>
<comment type="PTM">
    <text evidence="1">Processed by the macrocyclase-peptidase enzyme POPB to yield a toxic cyclic heptapeptide (By similarity). POPB first removes 10 residues from the N-terminus (By similarity). Conformational trapping of the remaining peptide forces the enzyme to release this intermediate rather than proceed to macrocyclization (By similarity). The enzyme rebinds the remaining peptide in a different conformation and catalyzes macrocyclization of the N-terminal 7 residues (By similarity).</text>
</comment>
<comment type="similarity">
    <text evidence="4">Belongs to the MSDIN fungal toxin family.</text>
</comment>
<organism>
    <name type="scientific">Amanita exitialis</name>
    <name type="common">Guangzhou destroying angel</name>
    <dbReference type="NCBI Taxonomy" id="262245"/>
    <lineage>
        <taxon>Eukaryota</taxon>
        <taxon>Fungi</taxon>
        <taxon>Dikarya</taxon>
        <taxon>Basidiomycota</taxon>
        <taxon>Agaricomycotina</taxon>
        <taxon>Agaricomycetes</taxon>
        <taxon>Agaricomycetidae</taxon>
        <taxon>Agaricales</taxon>
        <taxon>Pluteineae</taxon>
        <taxon>Amanitaceae</taxon>
        <taxon>Amanita</taxon>
    </lineage>
</organism>
<feature type="propeptide" id="PRO_0000443770" evidence="5">
    <location>
        <begin position="1"/>
        <end position="10"/>
    </location>
</feature>
<feature type="peptide" id="PRO_0000443771" description="Toxin MSD7" evidence="5">
    <location>
        <begin position="11"/>
        <end position="17"/>
    </location>
</feature>
<feature type="propeptide" id="PRO_0000443772" evidence="5">
    <location>
        <begin position="18"/>
        <end position="34"/>
    </location>
</feature>
<feature type="cross-link" description="Cyclopeptide (Ala-Pro)" evidence="5">
    <location>
        <begin position="11"/>
        <end position="17"/>
    </location>
</feature>
<protein>
    <recommendedName>
        <fullName evidence="3">MSDIN-like toxin proprotein 7</fullName>
    </recommendedName>
    <component>
        <recommendedName>
            <fullName evidence="3">Toxin MSD7</fullName>
        </recommendedName>
    </component>
</protein>
<accession>U5L3J7</accession>
<keyword id="KW-0800">Toxin</keyword>
<dbReference type="EMBL" id="KF387484">
    <property type="protein sequence ID" value="AGW83708.1"/>
    <property type="molecule type" value="mRNA"/>
</dbReference>
<dbReference type="GO" id="GO:0090729">
    <property type="term" value="F:toxin activity"/>
    <property type="evidence" value="ECO:0007669"/>
    <property type="project" value="UniProtKB-KW"/>
</dbReference>
<dbReference type="InterPro" id="IPR027582">
    <property type="entry name" value="Amanitin/phalloidin"/>
</dbReference>
<dbReference type="NCBIfam" id="TIGR04309">
    <property type="entry name" value="amanitin"/>
    <property type="match status" value="1"/>
</dbReference>
<evidence type="ECO:0000250" key="1">
    <source>
        <dbReference type="UniProtKB" id="A0A067SLB9"/>
    </source>
</evidence>
<evidence type="ECO:0000269" key="2">
    <source>
    </source>
</evidence>
<evidence type="ECO:0000303" key="3">
    <source>
    </source>
</evidence>
<evidence type="ECO:0000305" key="4"/>
<evidence type="ECO:0000305" key="5">
    <source>
    </source>
</evidence>
<name>MSD7_AMAEX</name>
<proteinExistence type="evidence at transcript level"/>
<sequence length="34" mass="3736">MSDINATRLPAWLTDCPCVGDDVNRLLTRGESLC</sequence>
<reference key="1">
    <citation type="journal article" date="2013" name="Gene">
        <title>Illumina-based de novo transcriptome sequencing and analysis of Amanita exitialis basidiocarps.</title>
        <authorList>
            <person name="Li P."/>
            <person name="Deng W.Q."/>
            <person name="Li T.H."/>
            <person name="Song B."/>
            <person name="Shen Y.H."/>
        </authorList>
    </citation>
    <scope>NUCLEOTIDE SEQUENCE [MRNA]</scope>
    <scope>FUNCTION</scope>
    <scope>TISSUE SPECIFICITY</scope>
</reference>